<gene>
    <name type="ORF">ORF35</name>
</gene>
<dbReference type="EMBL" id="AF191796">
    <property type="protein sequence ID" value="AAQ13762.1"/>
    <property type="molecule type" value="Genomic_DNA"/>
</dbReference>
<dbReference type="RefSeq" id="YP_529547.1">
    <property type="nucleotide sequence ID" value="NC_007914.1"/>
</dbReference>
<dbReference type="KEGG" id="vg:5142389"/>
<dbReference type="Proteomes" id="UP000007024">
    <property type="component" value="Segment"/>
</dbReference>
<organismHost>
    <name type="scientific">Haloarcula hispanica</name>
    <dbReference type="NCBI Taxonomy" id="51589"/>
</organismHost>
<name>Y035_HIS1I</name>
<protein>
    <recommendedName>
        <fullName>Uncharacterized protein ORF35</fullName>
    </recommendedName>
</protein>
<sequence>MQVIEHKKSGKVHIPPENGKGLVLCGSRMIQDCQEMATFRDSQWLDDFPEDYGDSQKDCEKCAKITDFNE</sequence>
<organism>
    <name type="scientific">His1 virus (isolate Australia/Victoria)</name>
    <name type="common">His1V</name>
    <name type="synonym">Haloarcula hispanica virus 1</name>
    <dbReference type="NCBI Taxonomy" id="654912"/>
    <lineage>
        <taxon>Viruses</taxon>
        <taxon>Viruses incertae sedis</taxon>
        <taxon>Halspiviridae</taxon>
        <taxon>Salterprovirus</taxon>
        <taxon>Salterprovirus His1</taxon>
    </lineage>
</organism>
<feature type="chain" id="PRO_0000384902" description="Uncharacterized protein ORF35">
    <location>
        <begin position="1"/>
        <end position="70"/>
    </location>
</feature>
<reference key="1">
    <citation type="journal article" date="2006" name="Virology">
        <title>His1 and His2 are distantly related, spindle-shaped haloviruses belonging to the novel virus group, Salterprovirus.</title>
        <authorList>
            <person name="Bath C."/>
            <person name="Cukalac T."/>
            <person name="Porter K."/>
            <person name="Dyall-Smith M.L."/>
        </authorList>
    </citation>
    <scope>NUCLEOTIDE SEQUENCE [GENOMIC DNA]</scope>
</reference>
<proteinExistence type="predicted"/>
<keyword id="KW-1185">Reference proteome</keyword>
<accession>Q25BG0</accession>